<dbReference type="EC" id="3.1.6.1" evidence="3"/>
<dbReference type="EC" id="3.1.6.18" evidence="3"/>
<dbReference type="EMBL" id="AJ720194">
    <property type="protein sequence ID" value="CAG31853.1"/>
    <property type="molecule type" value="mRNA"/>
</dbReference>
<dbReference type="RefSeq" id="NP_001026586.1">
    <property type="nucleotide sequence ID" value="NM_001031415.2"/>
</dbReference>
<dbReference type="SMR" id="Q5ZK90"/>
<dbReference type="FunCoup" id="Q5ZK90">
    <property type="interactions" value="211"/>
</dbReference>
<dbReference type="STRING" id="9031.ENSGALP00000049673"/>
<dbReference type="GlyCosmos" id="Q5ZK90">
    <property type="glycosylation" value="5 sites, No reported glycans"/>
</dbReference>
<dbReference type="GlyGen" id="Q5ZK90">
    <property type="glycosylation" value="5 sites"/>
</dbReference>
<dbReference type="PaxDb" id="9031-ENSGALP00000023597"/>
<dbReference type="GeneID" id="427116"/>
<dbReference type="KEGG" id="gga:427116"/>
<dbReference type="CTD" id="153642"/>
<dbReference type="VEuPathDB" id="HostDB:geneid_427116"/>
<dbReference type="eggNOG" id="KOG3731">
    <property type="taxonomic scope" value="Eukaryota"/>
</dbReference>
<dbReference type="InParanoid" id="Q5ZK90"/>
<dbReference type="OMA" id="RAYFGAC"/>
<dbReference type="OrthoDB" id="1886626at2759"/>
<dbReference type="PhylomeDB" id="Q5ZK90"/>
<dbReference type="PRO" id="PR:Q5ZK90"/>
<dbReference type="Proteomes" id="UP000000539">
    <property type="component" value="Unassembled WGS sequence"/>
</dbReference>
<dbReference type="GO" id="GO:0005576">
    <property type="term" value="C:extracellular region"/>
    <property type="evidence" value="ECO:0000250"/>
    <property type="project" value="UniProtKB"/>
</dbReference>
<dbReference type="GO" id="GO:0005764">
    <property type="term" value="C:lysosome"/>
    <property type="evidence" value="ECO:0000250"/>
    <property type="project" value="UniProtKB"/>
</dbReference>
<dbReference type="GO" id="GO:0004065">
    <property type="term" value="F:arylsulfatase activity"/>
    <property type="evidence" value="ECO:0000250"/>
    <property type="project" value="UniProtKB"/>
</dbReference>
<dbReference type="GO" id="GO:0015024">
    <property type="term" value="F:glucuronate-2-sulfatase activity"/>
    <property type="evidence" value="ECO:0000250"/>
    <property type="project" value="UniProtKB"/>
</dbReference>
<dbReference type="GO" id="GO:0046872">
    <property type="term" value="F:metal ion binding"/>
    <property type="evidence" value="ECO:0007669"/>
    <property type="project" value="UniProtKB-KW"/>
</dbReference>
<dbReference type="CDD" id="cd16171">
    <property type="entry name" value="ARSK"/>
    <property type="match status" value="1"/>
</dbReference>
<dbReference type="FunFam" id="3.40.720.10:FF:000039">
    <property type="entry name" value="arylsulfatase K"/>
    <property type="match status" value="1"/>
</dbReference>
<dbReference type="Gene3D" id="3.40.720.10">
    <property type="entry name" value="Alkaline Phosphatase, subunit A"/>
    <property type="match status" value="1"/>
</dbReference>
<dbReference type="InterPro" id="IPR017850">
    <property type="entry name" value="Alkaline_phosphatase_core_sf"/>
</dbReference>
<dbReference type="InterPro" id="IPR047892">
    <property type="entry name" value="ARSK"/>
</dbReference>
<dbReference type="InterPro" id="IPR051849">
    <property type="entry name" value="GAG-degrading_sulfatase"/>
</dbReference>
<dbReference type="InterPro" id="IPR000917">
    <property type="entry name" value="Sulfatase_N"/>
</dbReference>
<dbReference type="PANTHER" id="PTHR46615">
    <property type="entry name" value="ARYLSULFATASE K"/>
    <property type="match status" value="1"/>
</dbReference>
<dbReference type="PANTHER" id="PTHR46615:SF1">
    <property type="entry name" value="ARYLSULFATASE K"/>
    <property type="match status" value="1"/>
</dbReference>
<dbReference type="Pfam" id="PF00884">
    <property type="entry name" value="Sulfatase"/>
    <property type="match status" value="1"/>
</dbReference>
<dbReference type="SUPFAM" id="SSF53649">
    <property type="entry name" value="Alkaline phosphatase-like"/>
    <property type="match status" value="1"/>
</dbReference>
<name>ARSK_CHICK</name>
<accession>Q5ZK90</accession>
<comment type="function">
    <text evidence="3">Catalyzes the hydrolysis of pseudosubstrates such as p-nitrocatechol sulfate and p-nitrophenyl sulfate (By similarity). Catalyzes the hydrolysis of the 2-sulfate groups of the 2-O-sulfo-D-glucuronate residues of chondroitin sulfate, heparin and heparitin sulfate (By similarity). Acts selectively on 2-sulfoglucuronate and lacks activity against 2-sulfoiduronate (By similarity).</text>
</comment>
<comment type="catalytic activity">
    <reaction evidence="3">
        <text>an aryl sulfate + H2O = a phenol + sulfate + H(+)</text>
        <dbReference type="Rhea" id="RHEA:17261"/>
        <dbReference type="ChEBI" id="CHEBI:15377"/>
        <dbReference type="ChEBI" id="CHEBI:15378"/>
        <dbReference type="ChEBI" id="CHEBI:16189"/>
        <dbReference type="ChEBI" id="CHEBI:33853"/>
        <dbReference type="ChEBI" id="CHEBI:140317"/>
        <dbReference type="EC" id="3.1.6.1"/>
    </reaction>
</comment>
<comment type="catalytic activity">
    <reaction evidence="3">
        <text>Hydrolysis of the 2-sulfate groups of the 2-O-sulfo-D-glucuronate residues of chondroitin sulfate, heparin and heparitin sulfate.</text>
        <dbReference type="EC" id="3.1.6.18"/>
    </reaction>
</comment>
<comment type="cofactor">
    <cofactor evidence="2">
        <name>Ca(2+)</name>
        <dbReference type="ChEBI" id="CHEBI:29108"/>
    </cofactor>
    <text evidence="2">Binds 1 Ca(2+) ion per subunit.</text>
</comment>
<comment type="subcellular location">
    <subcellularLocation>
        <location evidence="3">Secreted</location>
    </subcellularLocation>
    <subcellularLocation>
        <location evidence="3">Lysosome</location>
    </subcellularLocation>
</comment>
<comment type="PTM">
    <text evidence="3">The conversion to 3-oxoalanine (also known as C-formylglycine, FGly), of a serine or cysteine residue in prokaryotes and of a cysteine residue in eukaryotes, is critical for catalytic activity.</text>
</comment>
<comment type="similarity">
    <text evidence="5">Belongs to the sulfatase family.</text>
</comment>
<reference key="1">
    <citation type="journal article" date="2005" name="Genome Biol.">
        <title>Full-length cDNAs from chicken bursal lymphocytes to facilitate gene function analysis.</title>
        <authorList>
            <person name="Caldwell R.B."/>
            <person name="Kierzek A.M."/>
            <person name="Arakawa H."/>
            <person name="Bezzubov Y."/>
            <person name="Zaim J."/>
            <person name="Fiedler P."/>
            <person name="Kutter S."/>
            <person name="Blagodatski A."/>
            <person name="Kostovska D."/>
            <person name="Koter M."/>
            <person name="Plachy J."/>
            <person name="Carninci P."/>
            <person name="Hayashizaki Y."/>
            <person name="Buerstedde J.-M."/>
        </authorList>
    </citation>
    <scope>NUCLEOTIDE SEQUENCE [LARGE SCALE MRNA]</scope>
    <source>
        <strain>CB</strain>
        <tissue>Bursa of Fabricius</tissue>
    </source>
</reference>
<gene>
    <name type="primary">ARSK</name>
</gene>
<sequence length="535" mass="61401">MGSGGPLLLLRGLLLVGAAYCAAPRPPRHSSRPNVLLVACDSFDGRLTFYPGNQTVDLPFINFMKRHGSVFLNAYTNSPICCPSRAAMWSGLFTHLTESWNNFKGLDPDYVTWMDLMQKHGYYTQKYGKLDYTSGHHSVSNRVEAWTRDVEFLLRQEGRPKVNLTGDRRHVRVMKTDWQVTDKAVTWIKKEAVNLTQPFALYLGLNLPHPYPSPYAGENFGSSTFLTSPYWLEKVKYEAIKIPTWTALSEMHPVDYYSSYTKNCTGEFTKQEVRRIRAFYYAMCAETDAMLGEIISALQDTDLLKKTIIMFTSDHGELAMEHRQFYKMSMYEGSSHVPLLVMGPGIRKQQQVSAVVSLVDIYPTMLDLARIPVLQNLSGYSLLPLLLEKAEDEVPRRGPRPSWVLSEFHGCNVNASTYMLRTDQWKYITYSDGVSVPPQLFDLSADPDELTNVAIKFPETVQSLDKILRSIVNYPKVSSTVQNYNKKQFISWKQSLGQNYSNVIANLRWHQDWLKEPKKYEDAIDRWLSQREQRK</sequence>
<keyword id="KW-0106">Calcium</keyword>
<keyword id="KW-0325">Glycoprotein</keyword>
<keyword id="KW-0378">Hydrolase</keyword>
<keyword id="KW-0458">Lysosome</keyword>
<keyword id="KW-0479">Metal-binding</keyword>
<keyword id="KW-1185">Reference proteome</keyword>
<keyword id="KW-0964">Secreted</keyword>
<keyword id="KW-0732">Signal</keyword>
<evidence type="ECO:0000250" key="1"/>
<evidence type="ECO:0000250" key="2">
    <source>
        <dbReference type="UniProtKB" id="P15289"/>
    </source>
</evidence>
<evidence type="ECO:0000250" key="3">
    <source>
        <dbReference type="UniProtKB" id="Q6UWY0"/>
    </source>
</evidence>
<evidence type="ECO:0000255" key="4"/>
<evidence type="ECO:0000305" key="5"/>
<organism>
    <name type="scientific">Gallus gallus</name>
    <name type="common">Chicken</name>
    <dbReference type="NCBI Taxonomy" id="9031"/>
    <lineage>
        <taxon>Eukaryota</taxon>
        <taxon>Metazoa</taxon>
        <taxon>Chordata</taxon>
        <taxon>Craniata</taxon>
        <taxon>Vertebrata</taxon>
        <taxon>Euteleostomi</taxon>
        <taxon>Archelosauria</taxon>
        <taxon>Archosauria</taxon>
        <taxon>Dinosauria</taxon>
        <taxon>Saurischia</taxon>
        <taxon>Theropoda</taxon>
        <taxon>Coelurosauria</taxon>
        <taxon>Aves</taxon>
        <taxon>Neognathae</taxon>
        <taxon>Galloanserae</taxon>
        <taxon>Galliformes</taxon>
        <taxon>Phasianidae</taxon>
        <taxon>Phasianinae</taxon>
        <taxon>Gallus</taxon>
    </lineage>
</organism>
<protein>
    <recommendedName>
        <fullName>Arylsulfatase K</fullName>
        <shortName>ASK</shortName>
        <ecNumber evidence="3">3.1.6.1</ecNumber>
    </recommendedName>
    <alternativeName>
        <fullName>Glucuronate-2-sulfatase</fullName>
        <ecNumber evidence="3">3.1.6.18</ecNumber>
    </alternativeName>
</protein>
<proteinExistence type="evidence at transcript level"/>
<feature type="signal peptide" evidence="4">
    <location>
        <begin position="1"/>
        <end position="21"/>
    </location>
</feature>
<feature type="chain" id="PRO_0000356288" description="Arylsulfatase K">
    <location>
        <begin position="22"/>
        <end position="535"/>
    </location>
</feature>
<feature type="active site" description="Nucleophile" evidence="2">
    <location>
        <position position="81"/>
    </location>
</feature>
<feature type="binding site" evidence="1">
    <location>
        <position position="41"/>
    </location>
    <ligand>
        <name>Ca(2+)</name>
        <dbReference type="ChEBI" id="CHEBI:29108"/>
    </ligand>
</feature>
<feature type="binding site" description="via 3-oxoalanine" evidence="2">
    <location>
        <position position="81"/>
    </location>
    <ligand>
        <name>Ca(2+)</name>
        <dbReference type="ChEBI" id="CHEBI:29108"/>
    </ligand>
</feature>
<feature type="binding site" evidence="2">
    <location>
        <position position="129"/>
    </location>
    <ligand>
        <name>substrate</name>
    </ligand>
</feature>
<feature type="binding site" evidence="2">
    <location>
        <position position="252"/>
    </location>
    <ligand>
        <name>substrate</name>
    </ligand>
</feature>
<feature type="binding site" evidence="2">
    <location>
        <position position="314"/>
    </location>
    <ligand>
        <name>Ca(2+)</name>
        <dbReference type="ChEBI" id="CHEBI:29108"/>
    </ligand>
</feature>
<feature type="binding site" evidence="2">
    <location>
        <position position="315"/>
    </location>
    <ligand>
        <name>Ca(2+)</name>
        <dbReference type="ChEBI" id="CHEBI:29108"/>
    </ligand>
</feature>
<feature type="modified residue" description="3-oxoalanine (Cys)" evidence="3">
    <location>
        <position position="81"/>
    </location>
</feature>
<feature type="glycosylation site" description="N-linked (GlcNAc...) asparagine" evidence="4">
    <location>
        <position position="194"/>
    </location>
</feature>
<feature type="glycosylation site" description="N-linked (GlcNAc...) asparagine" evidence="4">
    <location>
        <position position="263"/>
    </location>
</feature>
<feature type="glycosylation site" description="N-linked (GlcNAc...) asparagine" evidence="4">
    <location>
        <position position="376"/>
    </location>
</feature>
<feature type="glycosylation site" description="N-linked (GlcNAc...) asparagine" evidence="4">
    <location>
        <position position="414"/>
    </location>
</feature>
<feature type="glycosylation site" description="N-linked (GlcNAc...) asparagine" evidence="4">
    <location>
        <position position="499"/>
    </location>
</feature>